<evidence type="ECO:0000255" key="1">
    <source>
        <dbReference type="HAMAP-Rule" id="MF_00804"/>
    </source>
</evidence>
<comment type="function">
    <text evidence="1">Involved in the biosynthesis of the osmoprotectant glycine betaine. Catalyzes the irreversible oxidation of betaine aldehyde to the corresponding acid.</text>
</comment>
<comment type="catalytic activity">
    <reaction evidence="1">
        <text>betaine aldehyde + NAD(+) + H2O = glycine betaine + NADH + 2 H(+)</text>
        <dbReference type="Rhea" id="RHEA:15305"/>
        <dbReference type="ChEBI" id="CHEBI:15377"/>
        <dbReference type="ChEBI" id="CHEBI:15378"/>
        <dbReference type="ChEBI" id="CHEBI:15710"/>
        <dbReference type="ChEBI" id="CHEBI:17750"/>
        <dbReference type="ChEBI" id="CHEBI:57540"/>
        <dbReference type="ChEBI" id="CHEBI:57945"/>
        <dbReference type="EC" id="1.2.1.8"/>
    </reaction>
    <physiologicalReaction direction="left-to-right" evidence="1">
        <dbReference type="Rhea" id="RHEA:15306"/>
    </physiologicalReaction>
</comment>
<comment type="cofactor">
    <cofactor evidence="1">
        <name>K(+)</name>
        <dbReference type="ChEBI" id="CHEBI:29103"/>
    </cofactor>
    <text evidence="1">Binds 2 potassium ions per subunit.</text>
</comment>
<comment type="pathway">
    <text evidence="1">Amine and polyamine biosynthesis; betaine biosynthesis via choline pathway; betaine from betaine aldehyde: step 1/1.</text>
</comment>
<comment type="subunit">
    <text evidence="1">Dimer of dimers.</text>
</comment>
<comment type="similarity">
    <text evidence="1">Belongs to the aldehyde dehydrogenase family.</text>
</comment>
<gene>
    <name evidence="1" type="primary">betB</name>
    <name type="ordered locus">Smlt2238</name>
</gene>
<dbReference type="EC" id="1.2.1.8" evidence="1"/>
<dbReference type="EMBL" id="AM743169">
    <property type="protein sequence ID" value="CAQ45735.1"/>
    <property type="molecule type" value="Genomic_DNA"/>
</dbReference>
<dbReference type="RefSeq" id="WP_005409500.1">
    <property type="nucleotide sequence ID" value="NC_010943.1"/>
</dbReference>
<dbReference type="SMR" id="B2FQ90"/>
<dbReference type="EnsemblBacteria" id="CAQ45735">
    <property type="protein sequence ID" value="CAQ45735"/>
    <property type="gene ID" value="Smlt2238"/>
</dbReference>
<dbReference type="GeneID" id="93833343"/>
<dbReference type="KEGG" id="sml:Smlt2238"/>
<dbReference type="eggNOG" id="COG1012">
    <property type="taxonomic scope" value="Bacteria"/>
</dbReference>
<dbReference type="HOGENOM" id="CLU_005391_0_0_6"/>
<dbReference type="UniPathway" id="UPA00529">
    <property type="reaction ID" value="UER00386"/>
</dbReference>
<dbReference type="Proteomes" id="UP000008840">
    <property type="component" value="Chromosome"/>
</dbReference>
<dbReference type="GO" id="GO:0008802">
    <property type="term" value="F:betaine-aldehyde dehydrogenase (NAD+) activity"/>
    <property type="evidence" value="ECO:0007669"/>
    <property type="project" value="UniProtKB-UniRule"/>
</dbReference>
<dbReference type="GO" id="GO:0046872">
    <property type="term" value="F:metal ion binding"/>
    <property type="evidence" value="ECO:0007669"/>
    <property type="project" value="UniProtKB-KW"/>
</dbReference>
<dbReference type="GO" id="GO:0019285">
    <property type="term" value="P:glycine betaine biosynthetic process from choline"/>
    <property type="evidence" value="ECO:0007669"/>
    <property type="project" value="UniProtKB-UniRule"/>
</dbReference>
<dbReference type="CDD" id="cd07090">
    <property type="entry name" value="ALDH_F9_TMBADH"/>
    <property type="match status" value="1"/>
</dbReference>
<dbReference type="FunFam" id="3.40.309.10:FF:000014">
    <property type="entry name" value="NAD/NADP-dependent betaine aldehyde dehydrogenase"/>
    <property type="match status" value="1"/>
</dbReference>
<dbReference type="FunFam" id="3.40.605.10:FF:000007">
    <property type="entry name" value="NAD/NADP-dependent betaine aldehyde dehydrogenase"/>
    <property type="match status" value="1"/>
</dbReference>
<dbReference type="Gene3D" id="3.40.605.10">
    <property type="entry name" value="Aldehyde Dehydrogenase, Chain A, domain 1"/>
    <property type="match status" value="1"/>
</dbReference>
<dbReference type="Gene3D" id="3.40.309.10">
    <property type="entry name" value="Aldehyde Dehydrogenase, Chain A, domain 2"/>
    <property type="match status" value="1"/>
</dbReference>
<dbReference type="HAMAP" id="MF_00804">
    <property type="entry name" value="BADH"/>
    <property type="match status" value="1"/>
</dbReference>
<dbReference type="InterPro" id="IPR016161">
    <property type="entry name" value="Ald_DH/histidinol_DH"/>
</dbReference>
<dbReference type="InterPro" id="IPR016163">
    <property type="entry name" value="Ald_DH_C"/>
</dbReference>
<dbReference type="InterPro" id="IPR016160">
    <property type="entry name" value="Ald_DH_CS_CYS"/>
</dbReference>
<dbReference type="InterPro" id="IPR029510">
    <property type="entry name" value="Ald_DH_CS_GLU"/>
</dbReference>
<dbReference type="InterPro" id="IPR016162">
    <property type="entry name" value="Ald_DH_N"/>
</dbReference>
<dbReference type="InterPro" id="IPR015590">
    <property type="entry name" value="Aldehyde_DH_dom"/>
</dbReference>
<dbReference type="InterPro" id="IPR011264">
    <property type="entry name" value="BADH"/>
</dbReference>
<dbReference type="NCBIfam" id="TIGR01804">
    <property type="entry name" value="BADH"/>
    <property type="match status" value="1"/>
</dbReference>
<dbReference type="NCBIfam" id="NF009725">
    <property type="entry name" value="PRK13252.1"/>
    <property type="match status" value="1"/>
</dbReference>
<dbReference type="PANTHER" id="PTHR11699">
    <property type="entry name" value="ALDEHYDE DEHYDROGENASE-RELATED"/>
    <property type="match status" value="1"/>
</dbReference>
<dbReference type="Pfam" id="PF00171">
    <property type="entry name" value="Aldedh"/>
    <property type="match status" value="1"/>
</dbReference>
<dbReference type="SUPFAM" id="SSF53720">
    <property type="entry name" value="ALDH-like"/>
    <property type="match status" value="1"/>
</dbReference>
<dbReference type="PROSITE" id="PS00070">
    <property type="entry name" value="ALDEHYDE_DEHYDR_CYS"/>
    <property type="match status" value="1"/>
</dbReference>
<dbReference type="PROSITE" id="PS00687">
    <property type="entry name" value="ALDEHYDE_DEHYDR_GLU"/>
    <property type="match status" value="1"/>
</dbReference>
<name>BETB_STRMK</name>
<accession>B2FQ90</accession>
<protein>
    <recommendedName>
        <fullName evidence="1">Betaine aldehyde dehydrogenase</fullName>
        <shortName evidence="1">BADH</shortName>
        <ecNumber evidence="1">1.2.1.8</ecNumber>
    </recommendedName>
</protein>
<reference key="1">
    <citation type="journal article" date="2008" name="Genome Biol.">
        <title>The complete genome, comparative and functional analysis of Stenotrophomonas maltophilia reveals an organism heavily shielded by drug resistance determinants.</title>
        <authorList>
            <person name="Crossman L.C."/>
            <person name="Gould V.C."/>
            <person name="Dow J.M."/>
            <person name="Vernikos G.S."/>
            <person name="Okazaki A."/>
            <person name="Sebaihia M."/>
            <person name="Saunders D."/>
            <person name="Arrowsmith C."/>
            <person name="Carver T."/>
            <person name="Peters N."/>
            <person name="Adlem E."/>
            <person name="Kerhornou A."/>
            <person name="Lord A."/>
            <person name="Murphy L."/>
            <person name="Seeger K."/>
            <person name="Squares R."/>
            <person name="Rutter S."/>
            <person name="Quail M.A."/>
            <person name="Rajandream M.A."/>
            <person name="Harris D."/>
            <person name="Churcher C."/>
            <person name="Bentley S.D."/>
            <person name="Parkhill J."/>
            <person name="Thomson N.R."/>
            <person name="Avison M.B."/>
        </authorList>
    </citation>
    <scope>NUCLEOTIDE SEQUENCE [LARGE SCALE GENOMIC DNA]</scope>
    <source>
        <strain>K279a</strain>
    </source>
</reference>
<proteinExistence type="inferred from homology"/>
<organism>
    <name type="scientific">Stenotrophomonas maltophilia (strain K279a)</name>
    <dbReference type="NCBI Taxonomy" id="522373"/>
    <lineage>
        <taxon>Bacteria</taxon>
        <taxon>Pseudomonadati</taxon>
        <taxon>Pseudomonadota</taxon>
        <taxon>Gammaproteobacteria</taxon>
        <taxon>Lysobacterales</taxon>
        <taxon>Lysobacteraceae</taxon>
        <taxon>Stenotrophomonas</taxon>
        <taxon>Stenotrophomonas maltophilia group</taxon>
    </lineage>
</organism>
<sequence length="490" mass="52665">MTTLPVQQLYIHGQRVDATSGKTFKTVNPATGEVIAEVQVASQADVERAVQSASEGQKVWAAMTAMERSRILRRAVEILRERNDELAHLETLDTGKALAETTTVDIVTGADVVEYYAGLATAIEGIQLPLRESSFFYTRREPLGVVAGIGAWNYPIQIAMWKSAPALAAGNAMVFKPSEVTPLTAIRLAEIYTEAGVPAGVFNVVQGPGREIGQWLTEHPVIEKISFTGGVATGKKVMASAASSSLKEVTMELGGKSPLVICDDADLDRAADIAVMANFFSSGQVCTNGTRVFVPRSMLAAFEAAVVERVKRIRIGDPMAAETNFGPLTSFPHMENVLRYIESGKAEGARLLTGGGRATEGALANGAYVLPTVFSDCRDDMTIVKEEIFGPVMSILAYDDEDEVVRRANDTTFGLAAGVVSKDISRAHRIIHRLEAGICWINTWGESPAEMPVGGYKESGVGRENGISTLGHYTRIKSVQVELGDYASVF</sequence>
<keyword id="KW-0479">Metal-binding</keyword>
<keyword id="KW-0520">NAD</keyword>
<keyword id="KW-0521">NADP</keyword>
<keyword id="KW-0558">Oxidation</keyword>
<keyword id="KW-0560">Oxidoreductase</keyword>
<keyword id="KW-0630">Potassium</keyword>
<keyword id="KW-1185">Reference proteome</keyword>
<feature type="chain" id="PRO_1000133960" description="Betaine aldehyde dehydrogenase">
    <location>
        <begin position="1"/>
        <end position="490"/>
    </location>
</feature>
<feature type="active site" description="Charge relay system" evidence="1">
    <location>
        <position position="162"/>
    </location>
</feature>
<feature type="active site" description="Proton acceptor" evidence="1">
    <location>
        <position position="252"/>
    </location>
</feature>
<feature type="active site" description="Nucleophile" evidence="1">
    <location>
        <position position="286"/>
    </location>
</feature>
<feature type="active site" description="Charge relay system" evidence="1">
    <location>
        <position position="464"/>
    </location>
</feature>
<feature type="binding site" evidence="1">
    <location>
        <position position="26"/>
    </location>
    <ligand>
        <name>K(+)</name>
        <dbReference type="ChEBI" id="CHEBI:29103"/>
        <label>1</label>
    </ligand>
</feature>
<feature type="binding site" evidence="1">
    <location>
        <position position="93"/>
    </location>
    <ligand>
        <name>K(+)</name>
        <dbReference type="ChEBI" id="CHEBI:29103"/>
        <label>1</label>
    </ligand>
</feature>
<feature type="binding site" evidence="1">
    <location>
        <begin position="150"/>
        <end position="152"/>
    </location>
    <ligand>
        <name>NAD(+)</name>
        <dbReference type="ChEBI" id="CHEBI:57540"/>
    </ligand>
</feature>
<feature type="binding site" evidence="1">
    <location>
        <begin position="176"/>
        <end position="179"/>
    </location>
    <ligand>
        <name>NAD(+)</name>
        <dbReference type="ChEBI" id="CHEBI:57540"/>
    </ligand>
</feature>
<feature type="binding site" evidence="1">
    <location>
        <position position="180"/>
    </location>
    <ligand>
        <name>K(+)</name>
        <dbReference type="ChEBI" id="CHEBI:29103"/>
        <label>1</label>
    </ligand>
</feature>
<feature type="binding site" evidence="1">
    <location>
        <begin position="230"/>
        <end position="233"/>
    </location>
    <ligand>
        <name>NAD(+)</name>
        <dbReference type="ChEBI" id="CHEBI:57540"/>
    </ligand>
</feature>
<feature type="binding site" evidence="1">
    <location>
        <position position="246"/>
    </location>
    <ligand>
        <name>K(+)</name>
        <dbReference type="ChEBI" id="CHEBI:29103"/>
        <label>2</label>
    </ligand>
</feature>
<feature type="binding site" evidence="1">
    <location>
        <position position="254"/>
    </location>
    <ligand>
        <name>NAD(+)</name>
        <dbReference type="ChEBI" id="CHEBI:57540"/>
    </ligand>
</feature>
<feature type="binding site" description="covalent" evidence="1">
    <location>
        <position position="286"/>
    </location>
    <ligand>
        <name>NAD(+)</name>
        <dbReference type="ChEBI" id="CHEBI:57540"/>
    </ligand>
</feature>
<feature type="binding site" evidence="1">
    <location>
        <position position="387"/>
    </location>
    <ligand>
        <name>NAD(+)</name>
        <dbReference type="ChEBI" id="CHEBI:57540"/>
    </ligand>
</feature>
<feature type="binding site" evidence="1">
    <location>
        <position position="457"/>
    </location>
    <ligand>
        <name>K(+)</name>
        <dbReference type="ChEBI" id="CHEBI:29103"/>
        <label>2</label>
    </ligand>
</feature>
<feature type="binding site" evidence="1">
    <location>
        <position position="460"/>
    </location>
    <ligand>
        <name>K(+)</name>
        <dbReference type="ChEBI" id="CHEBI:29103"/>
        <label>2</label>
    </ligand>
</feature>
<feature type="site" description="Seems to be a necessary countercharge to the potassium cations" evidence="1">
    <location>
        <position position="248"/>
    </location>
</feature>
<feature type="modified residue" description="Cysteine sulfenic acid (-SOH)" evidence="1">
    <location>
        <position position="286"/>
    </location>
</feature>